<gene>
    <name evidence="1" type="primary">mutL</name>
    <name type="ordered locus">NMA1655</name>
</gene>
<proteinExistence type="inferred from homology"/>
<accession>Q9JTS2</accession>
<accession>A1ISN0</accession>
<comment type="function">
    <text evidence="1">This protein is involved in the repair of mismatches in DNA. It is required for dam-dependent methyl-directed DNA mismatch repair. May act as a 'molecular matchmaker', a protein that promotes the formation of a stable complex between two or more DNA-binding proteins in an ATP-dependent manner without itself being part of a final effector complex.</text>
</comment>
<comment type="similarity">
    <text evidence="1">Belongs to the DNA mismatch repair MutL/HexB family.</text>
</comment>
<dbReference type="EMBL" id="AL157959">
    <property type="protein sequence ID" value="CAM08789.1"/>
    <property type="molecule type" value="Genomic_DNA"/>
</dbReference>
<dbReference type="PIR" id="C81860">
    <property type="entry name" value="C81860"/>
</dbReference>
<dbReference type="RefSeq" id="WP_002251827.1">
    <property type="nucleotide sequence ID" value="NC_003116.1"/>
</dbReference>
<dbReference type="SMR" id="Q9JTS2"/>
<dbReference type="EnsemblBacteria" id="CAM08789">
    <property type="protein sequence ID" value="CAM08789"/>
    <property type="gene ID" value="NMA1655"/>
</dbReference>
<dbReference type="KEGG" id="nma:NMA1655"/>
<dbReference type="HOGENOM" id="CLU_004131_4_2_4"/>
<dbReference type="Proteomes" id="UP000000626">
    <property type="component" value="Chromosome"/>
</dbReference>
<dbReference type="GO" id="GO:0032300">
    <property type="term" value="C:mismatch repair complex"/>
    <property type="evidence" value="ECO:0007669"/>
    <property type="project" value="InterPro"/>
</dbReference>
<dbReference type="GO" id="GO:0005524">
    <property type="term" value="F:ATP binding"/>
    <property type="evidence" value="ECO:0007669"/>
    <property type="project" value="InterPro"/>
</dbReference>
<dbReference type="GO" id="GO:0016887">
    <property type="term" value="F:ATP hydrolysis activity"/>
    <property type="evidence" value="ECO:0007669"/>
    <property type="project" value="InterPro"/>
</dbReference>
<dbReference type="GO" id="GO:0140664">
    <property type="term" value="F:ATP-dependent DNA damage sensor activity"/>
    <property type="evidence" value="ECO:0007669"/>
    <property type="project" value="InterPro"/>
</dbReference>
<dbReference type="GO" id="GO:0030983">
    <property type="term" value="F:mismatched DNA binding"/>
    <property type="evidence" value="ECO:0007669"/>
    <property type="project" value="InterPro"/>
</dbReference>
<dbReference type="GO" id="GO:0006298">
    <property type="term" value="P:mismatch repair"/>
    <property type="evidence" value="ECO:0007669"/>
    <property type="project" value="UniProtKB-UniRule"/>
</dbReference>
<dbReference type="CDD" id="cd16926">
    <property type="entry name" value="HATPase_MutL-MLH-PMS-like"/>
    <property type="match status" value="1"/>
</dbReference>
<dbReference type="CDD" id="cd03482">
    <property type="entry name" value="MutL_Trans_MutL"/>
    <property type="match status" value="1"/>
</dbReference>
<dbReference type="FunFam" id="3.30.230.10:FF:000013">
    <property type="entry name" value="DNA mismatch repair endonuclease MutL"/>
    <property type="match status" value="1"/>
</dbReference>
<dbReference type="FunFam" id="3.30.565.10:FF:000003">
    <property type="entry name" value="DNA mismatch repair endonuclease MutL"/>
    <property type="match status" value="1"/>
</dbReference>
<dbReference type="Gene3D" id="3.30.230.10">
    <property type="match status" value="1"/>
</dbReference>
<dbReference type="Gene3D" id="3.30.565.10">
    <property type="entry name" value="Histidine kinase-like ATPase, C-terminal domain"/>
    <property type="match status" value="1"/>
</dbReference>
<dbReference type="Gene3D" id="3.30.1540.20">
    <property type="entry name" value="MutL, C-terminal domain, dimerisation subdomain"/>
    <property type="match status" value="1"/>
</dbReference>
<dbReference type="Gene3D" id="3.30.1370.100">
    <property type="entry name" value="MutL, C-terminal domain, regulatory subdomain"/>
    <property type="match status" value="1"/>
</dbReference>
<dbReference type="HAMAP" id="MF_00149">
    <property type="entry name" value="DNA_mis_repair"/>
    <property type="match status" value="1"/>
</dbReference>
<dbReference type="InterPro" id="IPR014762">
    <property type="entry name" value="DNA_mismatch_repair_CS"/>
</dbReference>
<dbReference type="InterPro" id="IPR020667">
    <property type="entry name" value="DNA_mismatch_repair_MutL"/>
</dbReference>
<dbReference type="InterPro" id="IPR013507">
    <property type="entry name" value="DNA_mismatch_S5_2-like"/>
</dbReference>
<dbReference type="InterPro" id="IPR036890">
    <property type="entry name" value="HATPase_C_sf"/>
</dbReference>
<dbReference type="InterPro" id="IPR002099">
    <property type="entry name" value="MutL/Mlh/PMS"/>
</dbReference>
<dbReference type="InterPro" id="IPR038973">
    <property type="entry name" value="MutL/Mlh/Pms-like"/>
</dbReference>
<dbReference type="InterPro" id="IPR014790">
    <property type="entry name" value="MutL_C"/>
</dbReference>
<dbReference type="InterPro" id="IPR042120">
    <property type="entry name" value="MutL_C_dimsub"/>
</dbReference>
<dbReference type="InterPro" id="IPR042121">
    <property type="entry name" value="MutL_C_regsub"/>
</dbReference>
<dbReference type="InterPro" id="IPR037198">
    <property type="entry name" value="MutL_C_sf"/>
</dbReference>
<dbReference type="InterPro" id="IPR020568">
    <property type="entry name" value="Ribosomal_Su5_D2-typ_SF"/>
</dbReference>
<dbReference type="InterPro" id="IPR014721">
    <property type="entry name" value="Ribsml_uS5_D2-typ_fold_subgr"/>
</dbReference>
<dbReference type="NCBIfam" id="TIGR00585">
    <property type="entry name" value="mutl"/>
    <property type="match status" value="1"/>
</dbReference>
<dbReference type="NCBIfam" id="NF000949">
    <property type="entry name" value="PRK00095.1-2"/>
    <property type="match status" value="1"/>
</dbReference>
<dbReference type="PANTHER" id="PTHR10073">
    <property type="entry name" value="DNA MISMATCH REPAIR PROTEIN MLH, PMS, MUTL"/>
    <property type="match status" value="1"/>
</dbReference>
<dbReference type="PANTHER" id="PTHR10073:SF12">
    <property type="entry name" value="DNA MISMATCH REPAIR PROTEIN MLH1"/>
    <property type="match status" value="1"/>
</dbReference>
<dbReference type="Pfam" id="PF01119">
    <property type="entry name" value="DNA_mis_repair"/>
    <property type="match status" value="1"/>
</dbReference>
<dbReference type="Pfam" id="PF13589">
    <property type="entry name" value="HATPase_c_3"/>
    <property type="match status" value="1"/>
</dbReference>
<dbReference type="Pfam" id="PF08676">
    <property type="entry name" value="MutL_C"/>
    <property type="match status" value="1"/>
</dbReference>
<dbReference type="SMART" id="SM01340">
    <property type="entry name" value="DNA_mis_repair"/>
    <property type="match status" value="1"/>
</dbReference>
<dbReference type="SMART" id="SM00853">
    <property type="entry name" value="MutL_C"/>
    <property type="match status" value="1"/>
</dbReference>
<dbReference type="SUPFAM" id="SSF55874">
    <property type="entry name" value="ATPase domain of HSP90 chaperone/DNA topoisomerase II/histidine kinase"/>
    <property type="match status" value="1"/>
</dbReference>
<dbReference type="SUPFAM" id="SSF118116">
    <property type="entry name" value="DNA mismatch repair protein MutL"/>
    <property type="match status" value="1"/>
</dbReference>
<dbReference type="SUPFAM" id="SSF54211">
    <property type="entry name" value="Ribosomal protein S5 domain 2-like"/>
    <property type="match status" value="1"/>
</dbReference>
<dbReference type="PROSITE" id="PS00058">
    <property type="entry name" value="DNA_MISMATCH_REPAIR_1"/>
    <property type="match status" value="1"/>
</dbReference>
<protein>
    <recommendedName>
        <fullName evidence="1">DNA mismatch repair protein MutL</fullName>
    </recommendedName>
</protein>
<feature type="chain" id="PRO_0000177955" description="DNA mismatch repair protein MutL">
    <location>
        <begin position="1"/>
        <end position="658"/>
    </location>
</feature>
<feature type="region of interest" description="Disordered" evidence="2">
    <location>
        <begin position="114"/>
        <end position="137"/>
    </location>
</feature>
<feature type="region of interest" description="Disordered" evidence="2">
    <location>
        <begin position="369"/>
        <end position="401"/>
    </location>
</feature>
<feature type="region of interest" description="Disordered" evidence="2">
    <location>
        <begin position="438"/>
        <end position="457"/>
    </location>
</feature>
<feature type="compositionally biased region" description="Basic and acidic residues" evidence="2">
    <location>
        <begin position="114"/>
        <end position="130"/>
    </location>
</feature>
<reference key="1">
    <citation type="journal article" date="2000" name="Nature">
        <title>Complete DNA sequence of a serogroup A strain of Neisseria meningitidis Z2491.</title>
        <authorList>
            <person name="Parkhill J."/>
            <person name="Achtman M."/>
            <person name="James K.D."/>
            <person name="Bentley S.D."/>
            <person name="Churcher C.M."/>
            <person name="Klee S.R."/>
            <person name="Morelli G."/>
            <person name="Basham D."/>
            <person name="Brown D."/>
            <person name="Chillingworth T."/>
            <person name="Davies R.M."/>
            <person name="Davis P."/>
            <person name="Devlin K."/>
            <person name="Feltwell T."/>
            <person name="Hamlin N."/>
            <person name="Holroyd S."/>
            <person name="Jagels K."/>
            <person name="Leather S."/>
            <person name="Moule S."/>
            <person name="Mungall K.L."/>
            <person name="Quail M.A."/>
            <person name="Rajandream M.A."/>
            <person name="Rutherford K.M."/>
            <person name="Simmonds M."/>
            <person name="Skelton J."/>
            <person name="Whitehead S."/>
            <person name="Spratt B.G."/>
            <person name="Barrell B.G."/>
        </authorList>
    </citation>
    <scope>NUCLEOTIDE SEQUENCE [LARGE SCALE GENOMIC DNA]</scope>
    <source>
        <strain>DSM 15465 / Z2491</strain>
    </source>
</reference>
<sequence>MPRIAALPDHLVNQIAAGEVVERPANALKEIVENSIDAGATAIDVELDGGGIRLIRVSDNGSGIHPDDIELALHRHATSKIKTLNDLEHVASMGFRGEGLASIASVSRLTLTSRQEDSSHATQVKAEDGKLSSPTAAAHPVGTTIEAAELFFNTPARRKFLKSENTEYAHCATMIERLALAHPHIAFSLKRDGKQVFKLPAQSLHERIAAIVGDDFQTASLEIDSGSGALRLYGAIAKPTFAKGKTDKQYCFVNHRFVRDKVMLHAVKQAYRDVLHNALTPAFVLFLDLPPEAVDVNVHPTKTEIRFRDSRQVHQLVFHTLNKALADTRADLTESVSNAGEVLHDITGVTPAPMPSENDSENLFNRASDYPTGNKPDTRNAFGSSGKTAPMPYQSAYAPQQRSLSLRESRAAMNTYAELYKKTDDIDLELSQFEQARFGNMPSETPAPKTDTPLSDGIPSQSELPPLGFAIAQLLGIYILAQAEDSLLLIDMHAAAERVNYEKMKRQRQENGRLQSQRLLIPITFAASHEECAALADYAETLAGFGLELSDMGGNTLAVRAVPTMLGKADVVSLARDVLGELAQVGSSQTIEEHENHILATMSCHGSVRAGRQLTLPEMNALLRDMENTPRSNQCNHGRPTWVKLTLKELDALFLRGQ</sequence>
<name>MUTL_NEIMA</name>
<keyword id="KW-0227">DNA damage</keyword>
<keyword id="KW-0234">DNA repair</keyword>
<evidence type="ECO:0000255" key="1">
    <source>
        <dbReference type="HAMAP-Rule" id="MF_00149"/>
    </source>
</evidence>
<evidence type="ECO:0000256" key="2">
    <source>
        <dbReference type="SAM" id="MobiDB-lite"/>
    </source>
</evidence>
<organism>
    <name type="scientific">Neisseria meningitidis serogroup A / serotype 4A (strain DSM 15465 / Z2491)</name>
    <dbReference type="NCBI Taxonomy" id="122587"/>
    <lineage>
        <taxon>Bacteria</taxon>
        <taxon>Pseudomonadati</taxon>
        <taxon>Pseudomonadota</taxon>
        <taxon>Betaproteobacteria</taxon>
        <taxon>Neisseriales</taxon>
        <taxon>Neisseriaceae</taxon>
        <taxon>Neisseria</taxon>
    </lineage>
</organism>